<name>HBD_CARSF</name>
<evidence type="ECO:0000255" key="1">
    <source>
        <dbReference type="PROSITE-ProRule" id="PRU00238"/>
    </source>
</evidence>
<organism>
    <name type="scientific">Carlito syrichta</name>
    <name type="common">Philippine tarsier</name>
    <name type="synonym">Tarsius syrichta</name>
    <dbReference type="NCBI Taxonomy" id="1868482"/>
    <lineage>
        <taxon>Eukaryota</taxon>
        <taxon>Metazoa</taxon>
        <taxon>Chordata</taxon>
        <taxon>Craniata</taxon>
        <taxon>Vertebrata</taxon>
        <taxon>Euteleostomi</taxon>
        <taxon>Mammalia</taxon>
        <taxon>Eutheria</taxon>
        <taxon>Euarchontoglires</taxon>
        <taxon>Primates</taxon>
        <taxon>Haplorrhini</taxon>
        <taxon>Tarsiiformes</taxon>
        <taxon>Tarsiidae</taxon>
        <taxon>Carlito</taxon>
    </lineage>
</organism>
<keyword id="KW-0349">Heme</keyword>
<keyword id="KW-0408">Iron</keyword>
<keyword id="KW-0479">Metal-binding</keyword>
<keyword id="KW-0561">Oxygen transport</keyword>
<keyword id="KW-1185">Reference proteome</keyword>
<keyword id="KW-0813">Transport</keyword>
<reference key="1">
    <citation type="journal article" date="1989" name="J. Biol. Chem.">
        <title>Tarsius delta- and beta-globin genes: conversions, evolution, and systematic implications.</title>
        <authorList>
            <person name="Koop B.F."/>
            <person name="Siemieniak D."/>
            <person name="Slightom J.L."/>
            <person name="Goodman M."/>
            <person name="Dunbar J."/>
            <person name="Wright P.C."/>
            <person name="Simons E.L."/>
        </authorList>
    </citation>
    <scope>NUCLEOTIDE SEQUENCE [GENOMIC DNA]</scope>
</reference>
<protein>
    <recommendedName>
        <fullName>Hemoglobin subunit delta</fullName>
    </recommendedName>
    <alternativeName>
        <fullName>Delta-globin</fullName>
    </alternativeName>
    <alternativeName>
        <fullName>Hemoglobin delta chain</fullName>
    </alternativeName>
</protein>
<comment type="subunit">
    <text>Heterotetramer of two delta chains and two alpha chains.</text>
</comment>
<comment type="tissue specificity">
    <text>Red blood cells.</text>
</comment>
<comment type="similarity">
    <text evidence="1">Belongs to the globin family.</text>
</comment>
<feature type="chain" id="PRO_0000053174" description="Hemoglobin subunit delta">
    <location>
        <begin position="1"/>
        <end position="147"/>
    </location>
</feature>
<feature type="domain" description="Globin" evidence="1">
    <location>
        <begin position="3"/>
        <end position="147"/>
    </location>
</feature>
<feature type="binding site" description="distal binding residue">
    <location>
        <position position="64"/>
    </location>
    <ligand>
        <name>heme b</name>
        <dbReference type="ChEBI" id="CHEBI:60344"/>
    </ligand>
    <ligandPart>
        <name>Fe</name>
        <dbReference type="ChEBI" id="CHEBI:18248"/>
    </ligandPart>
</feature>
<feature type="binding site" description="proximal binding residue">
    <location>
        <position position="93"/>
    </location>
    <ligand>
        <name>heme b</name>
        <dbReference type="ChEBI" id="CHEBI:60344"/>
    </ligand>
    <ligandPart>
        <name>Fe</name>
        <dbReference type="ChEBI" id="CHEBI:18248"/>
    </ligandPart>
</feature>
<sequence length="147" mass="16022">MVHLTADEKAAVTALWSKVNVEDVGGEALGRLLVVYPWTQRFFDSFGDLSTPAAVMSNAKVKAHGKKVLNAFSDGMAHLDNLKGTFAKLSELHCDKLHVDPENFRLLGNVLVCVLAHHFGKQFTPQLQAAYQKVVAGVAAALAHKYH</sequence>
<proteinExistence type="evidence at transcript level"/>
<dbReference type="EMBL" id="J04428">
    <property type="protein sequence ID" value="AAA36957.1"/>
    <property type="molecule type" value="Genomic_DNA"/>
</dbReference>
<dbReference type="SMR" id="P13558"/>
<dbReference type="STRING" id="1868482.ENSTSYP00000002520"/>
<dbReference type="GeneID" id="103254683"/>
<dbReference type="KEGG" id="csyr:103254683"/>
<dbReference type="HOGENOM" id="CLU_003827_10_0_1"/>
<dbReference type="OMA" id="LWGQIDV"/>
<dbReference type="OrthoDB" id="9886081at2759"/>
<dbReference type="TreeFam" id="TF333268"/>
<dbReference type="Proteomes" id="UP000189704">
    <property type="component" value="Unplaced"/>
</dbReference>
<dbReference type="GO" id="GO:0072562">
    <property type="term" value="C:blood microparticle"/>
    <property type="evidence" value="ECO:0007669"/>
    <property type="project" value="TreeGrafter"/>
</dbReference>
<dbReference type="GO" id="GO:0031838">
    <property type="term" value="C:haptoglobin-hemoglobin complex"/>
    <property type="evidence" value="ECO:0007669"/>
    <property type="project" value="TreeGrafter"/>
</dbReference>
<dbReference type="GO" id="GO:0005833">
    <property type="term" value="C:hemoglobin complex"/>
    <property type="evidence" value="ECO:0007669"/>
    <property type="project" value="InterPro"/>
</dbReference>
<dbReference type="GO" id="GO:0031720">
    <property type="term" value="F:haptoglobin binding"/>
    <property type="evidence" value="ECO:0007669"/>
    <property type="project" value="TreeGrafter"/>
</dbReference>
<dbReference type="GO" id="GO:0020037">
    <property type="term" value="F:heme binding"/>
    <property type="evidence" value="ECO:0007669"/>
    <property type="project" value="InterPro"/>
</dbReference>
<dbReference type="GO" id="GO:0031721">
    <property type="term" value="F:hemoglobin alpha binding"/>
    <property type="evidence" value="ECO:0007669"/>
    <property type="project" value="TreeGrafter"/>
</dbReference>
<dbReference type="GO" id="GO:0046872">
    <property type="term" value="F:metal ion binding"/>
    <property type="evidence" value="ECO:0007669"/>
    <property type="project" value="UniProtKB-KW"/>
</dbReference>
<dbReference type="GO" id="GO:0043177">
    <property type="term" value="F:organic acid binding"/>
    <property type="evidence" value="ECO:0007669"/>
    <property type="project" value="TreeGrafter"/>
</dbReference>
<dbReference type="GO" id="GO:0019825">
    <property type="term" value="F:oxygen binding"/>
    <property type="evidence" value="ECO:0007669"/>
    <property type="project" value="InterPro"/>
</dbReference>
<dbReference type="GO" id="GO:0005344">
    <property type="term" value="F:oxygen carrier activity"/>
    <property type="evidence" value="ECO:0007669"/>
    <property type="project" value="UniProtKB-KW"/>
</dbReference>
<dbReference type="GO" id="GO:0004601">
    <property type="term" value="F:peroxidase activity"/>
    <property type="evidence" value="ECO:0007669"/>
    <property type="project" value="TreeGrafter"/>
</dbReference>
<dbReference type="GO" id="GO:0042744">
    <property type="term" value="P:hydrogen peroxide catabolic process"/>
    <property type="evidence" value="ECO:0007669"/>
    <property type="project" value="TreeGrafter"/>
</dbReference>
<dbReference type="CDD" id="cd08925">
    <property type="entry name" value="Hb-beta-like"/>
    <property type="match status" value="1"/>
</dbReference>
<dbReference type="FunFam" id="1.10.490.10:FF:000001">
    <property type="entry name" value="Hemoglobin subunit beta"/>
    <property type="match status" value="1"/>
</dbReference>
<dbReference type="Gene3D" id="1.10.490.10">
    <property type="entry name" value="Globins"/>
    <property type="match status" value="1"/>
</dbReference>
<dbReference type="InterPro" id="IPR000971">
    <property type="entry name" value="Globin"/>
</dbReference>
<dbReference type="InterPro" id="IPR009050">
    <property type="entry name" value="Globin-like_sf"/>
</dbReference>
<dbReference type="InterPro" id="IPR012292">
    <property type="entry name" value="Globin/Proto"/>
</dbReference>
<dbReference type="InterPro" id="IPR002337">
    <property type="entry name" value="Hemoglobin_b"/>
</dbReference>
<dbReference type="InterPro" id="IPR050056">
    <property type="entry name" value="Hemoglobin_oxygen_transport"/>
</dbReference>
<dbReference type="PANTHER" id="PTHR11442">
    <property type="entry name" value="HEMOGLOBIN FAMILY MEMBER"/>
    <property type="match status" value="1"/>
</dbReference>
<dbReference type="PANTHER" id="PTHR11442:SF42">
    <property type="entry name" value="HEMOGLOBIN SUBUNIT BETA"/>
    <property type="match status" value="1"/>
</dbReference>
<dbReference type="Pfam" id="PF00042">
    <property type="entry name" value="Globin"/>
    <property type="match status" value="1"/>
</dbReference>
<dbReference type="PRINTS" id="PR00814">
    <property type="entry name" value="BETAHAEM"/>
</dbReference>
<dbReference type="SUPFAM" id="SSF46458">
    <property type="entry name" value="Globin-like"/>
    <property type="match status" value="1"/>
</dbReference>
<dbReference type="PROSITE" id="PS01033">
    <property type="entry name" value="GLOBIN"/>
    <property type="match status" value="1"/>
</dbReference>
<gene>
    <name type="primary">HBD</name>
</gene>
<accession>P13558</accession>